<gene>
    <name evidence="1" type="primary">hisH</name>
    <name type="ordered locus">STH2835</name>
</gene>
<organism>
    <name type="scientific">Symbiobacterium thermophilum (strain DSM 24528 / JCM 14929 / IAM 14863 / T)</name>
    <dbReference type="NCBI Taxonomy" id="292459"/>
    <lineage>
        <taxon>Bacteria</taxon>
        <taxon>Bacillati</taxon>
        <taxon>Bacillota</taxon>
        <taxon>Clostridia</taxon>
        <taxon>Eubacteriales</taxon>
        <taxon>Symbiobacteriaceae</taxon>
        <taxon>Symbiobacterium</taxon>
    </lineage>
</organism>
<keyword id="KW-0028">Amino-acid biosynthesis</keyword>
<keyword id="KW-0963">Cytoplasm</keyword>
<keyword id="KW-0315">Glutamine amidotransferase</keyword>
<keyword id="KW-0368">Histidine biosynthesis</keyword>
<keyword id="KW-0378">Hydrolase</keyword>
<keyword id="KW-0456">Lyase</keyword>
<keyword id="KW-1185">Reference proteome</keyword>
<comment type="function">
    <text evidence="1">IGPS catalyzes the conversion of PRFAR and glutamine to IGP, AICAR and glutamate. The HisH subunit catalyzes the hydrolysis of glutamine to glutamate and ammonia as part of the synthesis of IGP and AICAR. The resulting ammonia molecule is channeled to the active site of HisF.</text>
</comment>
<comment type="catalytic activity">
    <reaction evidence="1">
        <text>5-[(5-phospho-1-deoxy-D-ribulos-1-ylimino)methylamino]-1-(5-phospho-beta-D-ribosyl)imidazole-4-carboxamide + L-glutamine = D-erythro-1-(imidazol-4-yl)glycerol 3-phosphate + 5-amino-1-(5-phospho-beta-D-ribosyl)imidazole-4-carboxamide + L-glutamate + H(+)</text>
        <dbReference type="Rhea" id="RHEA:24793"/>
        <dbReference type="ChEBI" id="CHEBI:15378"/>
        <dbReference type="ChEBI" id="CHEBI:29985"/>
        <dbReference type="ChEBI" id="CHEBI:58278"/>
        <dbReference type="ChEBI" id="CHEBI:58359"/>
        <dbReference type="ChEBI" id="CHEBI:58475"/>
        <dbReference type="ChEBI" id="CHEBI:58525"/>
        <dbReference type="EC" id="4.3.2.10"/>
    </reaction>
</comment>
<comment type="catalytic activity">
    <reaction evidence="1">
        <text>L-glutamine + H2O = L-glutamate + NH4(+)</text>
        <dbReference type="Rhea" id="RHEA:15889"/>
        <dbReference type="ChEBI" id="CHEBI:15377"/>
        <dbReference type="ChEBI" id="CHEBI:28938"/>
        <dbReference type="ChEBI" id="CHEBI:29985"/>
        <dbReference type="ChEBI" id="CHEBI:58359"/>
        <dbReference type="EC" id="3.5.1.2"/>
    </reaction>
</comment>
<comment type="pathway">
    <text evidence="1">Amino-acid biosynthesis; L-histidine biosynthesis; L-histidine from 5-phospho-alpha-D-ribose 1-diphosphate: step 5/9.</text>
</comment>
<comment type="subunit">
    <text evidence="1">Heterodimer of HisH and HisF.</text>
</comment>
<comment type="subcellular location">
    <subcellularLocation>
        <location evidence="1">Cytoplasm</location>
    </subcellularLocation>
</comment>
<protein>
    <recommendedName>
        <fullName evidence="1">Imidazole glycerol phosphate synthase subunit HisH</fullName>
        <ecNumber evidence="1">4.3.2.10</ecNumber>
    </recommendedName>
    <alternativeName>
        <fullName evidence="1">IGP synthase glutaminase subunit</fullName>
        <ecNumber evidence="1">3.5.1.2</ecNumber>
    </alternativeName>
    <alternativeName>
        <fullName evidence="1">IGP synthase subunit HisH</fullName>
    </alternativeName>
    <alternativeName>
        <fullName evidence="1">ImGP synthase subunit HisH</fullName>
        <shortName evidence="1">IGPS subunit HisH</shortName>
    </alternativeName>
</protein>
<accession>Q67KH8</accession>
<reference key="1">
    <citation type="journal article" date="2004" name="Nucleic Acids Res.">
        <title>Genome sequence of Symbiobacterium thermophilum, an uncultivable bacterium that depends on microbial commensalism.</title>
        <authorList>
            <person name="Ueda K."/>
            <person name="Yamashita A."/>
            <person name="Ishikawa J."/>
            <person name="Shimada M."/>
            <person name="Watsuji T."/>
            <person name="Morimura K."/>
            <person name="Ikeda H."/>
            <person name="Hattori M."/>
            <person name="Beppu T."/>
        </authorList>
    </citation>
    <scope>NUCLEOTIDE SEQUENCE [LARGE SCALE GENOMIC DNA]</scope>
    <source>
        <strain>DSM 24528 / JCM 14929 / IAM 14863 / T</strain>
    </source>
</reference>
<feature type="chain" id="PRO_0000231763" description="Imidazole glycerol phosphate synthase subunit HisH">
    <location>
        <begin position="1"/>
        <end position="212"/>
    </location>
</feature>
<feature type="domain" description="Glutamine amidotransferase type-1" evidence="1">
    <location>
        <begin position="3"/>
        <end position="208"/>
    </location>
</feature>
<feature type="active site" description="Nucleophile" evidence="1">
    <location>
        <position position="81"/>
    </location>
</feature>
<feature type="active site" evidence="1">
    <location>
        <position position="183"/>
    </location>
</feature>
<feature type="active site" evidence="1">
    <location>
        <position position="185"/>
    </location>
</feature>
<evidence type="ECO:0000255" key="1">
    <source>
        <dbReference type="HAMAP-Rule" id="MF_00278"/>
    </source>
</evidence>
<sequence>MARIVIVDYGMGNLASVRNALRAVGFEAAVSDDPAAVAGADGLVLPGVGAFGTGMQNLARRGLDQAVRQAAAAGRPVLGICLGMQLLLAEGDEGGPRPGLGLLEGRVARLPDGLPLPQIGWNLVEPQRDHPLFAGLPTPFWAYFDHAYAVEGEPPSTALALTDYGRTYPSVVGRGNLLGIQFHPEKSSRAGLRMLANWGRMVCDLISTRPST</sequence>
<proteinExistence type="inferred from homology"/>
<name>HIS5_SYMTH</name>
<dbReference type="EC" id="4.3.2.10" evidence="1"/>
<dbReference type="EC" id="3.5.1.2" evidence="1"/>
<dbReference type="EMBL" id="AP006840">
    <property type="protein sequence ID" value="BAD41820.1"/>
    <property type="molecule type" value="Genomic_DNA"/>
</dbReference>
<dbReference type="RefSeq" id="WP_011196954.1">
    <property type="nucleotide sequence ID" value="NC_006177.1"/>
</dbReference>
<dbReference type="SMR" id="Q67KH8"/>
<dbReference type="STRING" id="292459.STH2835"/>
<dbReference type="KEGG" id="sth:STH2835"/>
<dbReference type="eggNOG" id="COG0118">
    <property type="taxonomic scope" value="Bacteria"/>
</dbReference>
<dbReference type="HOGENOM" id="CLU_071837_2_2_9"/>
<dbReference type="OrthoDB" id="9807137at2"/>
<dbReference type="UniPathway" id="UPA00031">
    <property type="reaction ID" value="UER00010"/>
</dbReference>
<dbReference type="Proteomes" id="UP000000417">
    <property type="component" value="Chromosome"/>
</dbReference>
<dbReference type="GO" id="GO:0005737">
    <property type="term" value="C:cytoplasm"/>
    <property type="evidence" value="ECO:0007669"/>
    <property type="project" value="UniProtKB-SubCell"/>
</dbReference>
<dbReference type="GO" id="GO:0004359">
    <property type="term" value="F:glutaminase activity"/>
    <property type="evidence" value="ECO:0007669"/>
    <property type="project" value="UniProtKB-EC"/>
</dbReference>
<dbReference type="GO" id="GO:0000107">
    <property type="term" value="F:imidazoleglycerol-phosphate synthase activity"/>
    <property type="evidence" value="ECO:0007669"/>
    <property type="project" value="UniProtKB-UniRule"/>
</dbReference>
<dbReference type="GO" id="GO:0016829">
    <property type="term" value="F:lyase activity"/>
    <property type="evidence" value="ECO:0007669"/>
    <property type="project" value="UniProtKB-KW"/>
</dbReference>
<dbReference type="GO" id="GO:0000105">
    <property type="term" value="P:L-histidine biosynthetic process"/>
    <property type="evidence" value="ECO:0007669"/>
    <property type="project" value="UniProtKB-UniRule"/>
</dbReference>
<dbReference type="CDD" id="cd01748">
    <property type="entry name" value="GATase1_IGP_Synthase"/>
    <property type="match status" value="1"/>
</dbReference>
<dbReference type="Gene3D" id="3.40.50.880">
    <property type="match status" value="1"/>
</dbReference>
<dbReference type="HAMAP" id="MF_00278">
    <property type="entry name" value="HisH"/>
    <property type="match status" value="1"/>
</dbReference>
<dbReference type="InterPro" id="IPR029062">
    <property type="entry name" value="Class_I_gatase-like"/>
</dbReference>
<dbReference type="InterPro" id="IPR017926">
    <property type="entry name" value="GATASE"/>
</dbReference>
<dbReference type="InterPro" id="IPR010139">
    <property type="entry name" value="Imidazole-glycPsynth_HisH"/>
</dbReference>
<dbReference type="NCBIfam" id="TIGR01855">
    <property type="entry name" value="IMP_synth_hisH"/>
    <property type="match status" value="1"/>
</dbReference>
<dbReference type="PANTHER" id="PTHR42701">
    <property type="entry name" value="IMIDAZOLE GLYCEROL PHOSPHATE SYNTHASE SUBUNIT HISH"/>
    <property type="match status" value="1"/>
</dbReference>
<dbReference type="PANTHER" id="PTHR42701:SF1">
    <property type="entry name" value="IMIDAZOLE GLYCEROL PHOSPHATE SYNTHASE SUBUNIT HISH"/>
    <property type="match status" value="1"/>
</dbReference>
<dbReference type="Pfam" id="PF00117">
    <property type="entry name" value="GATase"/>
    <property type="match status" value="1"/>
</dbReference>
<dbReference type="PIRSF" id="PIRSF000495">
    <property type="entry name" value="Amidotransf_hisH"/>
    <property type="match status" value="1"/>
</dbReference>
<dbReference type="SUPFAM" id="SSF52317">
    <property type="entry name" value="Class I glutamine amidotransferase-like"/>
    <property type="match status" value="1"/>
</dbReference>
<dbReference type="PROSITE" id="PS51273">
    <property type="entry name" value="GATASE_TYPE_1"/>
    <property type="match status" value="1"/>
</dbReference>